<gene>
    <name evidence="1" type="primary">accD</name>
    <name type="ordered locus">STER_0438</name>
</gene>
<organism>
    <name type="scientific">Streptococcus thermophilus (strain ATCC BAA-491 / LMD-9)</name>
    <dbReference type="NCBI Taxonomy" id="322159"/>
    <lineage>
        <taxon>Bacteria</taxon>
        <taxon>Bacillati</taxon>
        <taxon>Bacillota</taxon>
        <taxon>Bacilli</taxon>
        <taxon>Lactobacillales</taxon>
        <taxon>Streptococcaceae</taxon>
        <taxon>Streptococcus</taxon>
    </lineage>
</organism>
<keyword id="KW-0067">ATP-binding</keyword>
<keyword id="KW-0963">Cytoplasm</keyword>
<keyword id="KW-0275">Fatty acid biosynthesis</keyword>
<keyword id="KW-0276">Fatty acid metabolism</keyword>
<keyword id="KW-0444">Lipid biosynthesis</keyword>
<keyword id="KW-0443">Lipid metabolism</keyword>
<keyword id="KW-0479">Metal-binding</keyword>
<keyword id="KW-0547">Nucleotide-binding</keyword>
<keyword id="KW-0808">Transferase</keyword>
<keyword id="KW-0862">Zinc</keyword>
<keyword id="KW-0863">Zinc-finger</keyword>
<evidence type="ECO:0000255" key="1">
    <source>
        <dbReference type="HAMAP-Rule" id="MF_01395"/>
    </source>
</evidence>
<evidence type="ECO:0000255" key="2">
    <source>
        <dbReference type="PROSITE-ProRule" id="PRU01136"/>
    </source>
</evidence>
<sequence length="288" mass="31510">MGLFDRKEKYIRINPNRYVRNGVDHPVPEVPDDLFAKCPGCKQAIYQKDLGQAKICPNCSYTFRISAKERLDLTVDEGSFQELFTGIKTENPLNFPGYMEKLAATKEKTGLDEAVVTGVATIKGQKTALAIMDSNFIMASMGTVVGEKITKLFEYAILEKLPVVIFTASGGARMQEGIMSLMQMAKISAAVKCHSNAGLLYLTVLTDPTTGGVTASFAMQGDIILAEPQTLIGFAGRRVIENTVRETLPDDFQKAEFLQEHGFVDAIVKRTELADTIATLLSFHGGVQ</sequence>
<comment type="function">
    <text evidence="1">Component of the acetyl coenzyme A carboxylase (ACC) complex. Biotin carboxylase (BC) catalyzes the carboxylation of biotin on its carrier protein (BCCP) and then the CO(2) group is transferred by the transcarboxylase to acetyl-CoA to form malonyl-CoA.</text>
</comment>
<comment type="catalytic activity">
    <reaction evidence="1">
        <text>N(6)-carboxybiotinyl-L-lysyl-[protein] + acetyl-CoA = N(6)-biotinyl-L-lysyl-[protein] + malonyl-CoA</text>
        <dbReference type="Rhea" id="RHEA:54728"/>
        <dbReference type="Rhea" id="RHEA-COMP:10505"/>
        <dbReference type="Rhea" id="RHEA-COMP:10506"/>
        <dbReference type="ChEBI" id="CHEBI:57288"/>
        <dbReference type="ChEBI" id="CHEBI:57384"/>
        <dbReference type="ChEBI" id="CHEBI:83144"/>
        <dbReference type="ChEBI" id="CHEBI:83145"/>
        <dbReference type="EC" id="2.1.3.15"/>
    </reaction>
</comment>
<comment type="cofactor">
    <cofactor evidence="1">
        <name>Zn(2+)</name>
        <dbReference type="ChEBI" id="CHEBI:29105"/>
    </cofactor>
    <text evidence="1">Binds 1 zinc ion per subunit.</text>
</comment>
<comment type="pathway">
    <text evidence="1">Lipid metabolism; malonyl-CoA biosynthesis; malonyl-CoA from acetyl-CoA: step 1/1.</text>
</comment>
<comment type="subunit">
    <text evidence="1">Acetyl-CoA carboxylase is a heterohexamer composed of biotin carboxyl carrier protein (AccB), biotin carboxylase (AccC) and two subunits each of ACCase subunit alpha (AccA) and ACCase subunit beta (AccD).</text>
</comment>
<comment type="subcellular location">
    <subcellularLocation>
        <location evidence="1">Cytoplasm</location>
    </subcellularLocation>
</comment>
<comment type="similarity">
    <text evidence="1">Belongs to the AccD/PCCB family.</text>
</comment>
<reference key="1">
    <citation type="journal article" date="2006" name="Proc. Natl. Acad. Sci. U.S.A.">
        <title>Comparative genomics of the lactic acid bacteria.</title>
        <authorList>
            <person name="Makarova K.S."/>
            <person name="Slesarev A."/>
            <person name="Wolf Y.I."/>
            <person name="Sorokin A."/>
            <person name="Mirkin B."/>
            <person name="Koonin E.V."/>
            <person name="Pavlov A."/>
            <person name="Pavlova N."/>
            <person name="Karamychev V."/>
            <person name="Polouchine N."/>
            <person name="Shakhova V."/>
            <person name="Grigoriev I."/>
            <person name="Lou Y."/>
            <person name="Rohksar D."/>
            <person name="Lucas S."/>
            <person name="Huang K."/>
            <person name="Goodstein D.M."/>
            <person name="Hawkins T."/>
            <person name="Plengvidhya V."/>
            <person name="Welker D."/>
            <person name="Hughes J."/>
            <person name="Goh Y."/>
            <person name="Benson A."/>
            <person name="Baldwin K."/>
            <person name="Lee J.-H."/>
            <person name="Diaz-Muniz I."/>
            <person name="Dosti B."/>
            <person name="Smeianov V."/>
            <person name="Wechter W."/>
            <person name="Barabote R."/>
            <person name="Lorca G."/>
            <person name="Altermann E."/>
            <person name="Barrangou R."/>
            <person name="Ganesan B."/>
            <person name="Xie Y."/>
            <person name="Rawsthorne H."/>
            <person name="Tamir D."/>
            <person name="Parker C."/>
            <person name="Breidt F."/>
            <person name="Broadbent J.R."/>
            <person name="Hutkins R."/>
            <person name="O'Sullivan D."/>
            <person name="Steele J."/>
            <person name="Unlu G."/>
            <person name="Saier M.H. Jr."/>
            <person name="Klaenhammer T."/>
            <person name="Richardson P."/>
            <person name="Kozyavkin S."/>
            <person name="Weimer B.C."/>
            <person name="Mills D.A."/>
        </authorList>
    </citation>
    <scope>NUCLEOTIDE SEQUENCE [LARGE SCALE GENOMIC DNA]</scope>
    <source>
        <strain>ATCC BAA-491 / LMD-9</strain>
    </source>
</reference>
<protein>
    <recommendedName>
        <fullName evidence="1">Acetyl-coenzyme A carboxylase carboxyl transferase subunit beta</fullName>
        <shortName evidence="1">ACCase subunit beta</shortName>
        <shortName evidence="1">Acetyl-CoA carboxylase carboxyltransferase subunit beta</shortName>
        <ecNumber evidence="1">2.1.3.15</ecNumber>
    </recommendedName>
</protein>
<dbReference type="EC" id="2.1.3.15" evidence="1"/>
<dbReference type="EMBL" id="CP000419">
    <property type="protein sequence ID" value="ABJ65726.1"/>
    <property type="molecule type" value="Genomic_DNA"/>
</dbReference>
<dbReference type="RefSeq" id="WP_011680785.1">
    <property type="nucleotide sequence ID" value="NC_008532.1"/>
</dbReference>
<dbReference type="SMR" id="Q03M46"/>
<dbReference type="KEGG" id="ste:STER_0438"/>
<dbReference type="HOGENOM" id="CLU_015486_1_1_9"/>
<dbReference type="UniPathway" id="UPA00655">
    <property type="reaction ID" value="UER00711"/>
</dbReference>
<dbReference type="GO" id="GO:0009317">
    <property type="term" value="C:acetyl-CoA carboxylase complex"/>
    <property type="evidence" value="ECO:0007669"/>
    <property type="project" value="InterPro"/>
</dbReference>
<dbReference type="GO" id="GO:0003989">
    <property type="term" value="F:acetyl-CoA carboxylase activity"/>
    <property type="evidence" value="ECO:0007669"/>
    <property type="project" value="InterPro"/>
</dbReference>
<dbReference type="GO" id="GO:0005524">
    <property type="term" value="F:ATP binding"/>
    <property type="evidence" value="ECO:0007669"/>
    <property type="project" value="UniProtKB-KW"/>
</dbReference>
<dbReference type="GO" id="GO:0016743">
    <property type="term" value="F:carboxyl- or carbamoyltransferase activity"/>
    <property type="evidence" value="ECO:0007669"/>
    <property type="project" value="UniProtKB-UniRule"/>
</dbReference>
<dbReference type="GO" id="GO:0008270">
    <property type="term" value="F:zinc ion binding"/>
    <property type="evidence" value="ECO:0007669"/>
    <property type="project" value="UniProtKB-UniRule"/>
</dbReference>
<dbReference type="GO" id="GO:0006633">
    <property type="term" value="P:fatty acid biosynthetic process"/>
    <property type="evidence" value="ECO:0007669"/>
    <property type="project" value="UniProtKB-KW"/>
</dbReference>
<dbReference type="GO" id="GO:2001295">
    <property type="term" value="P:malonyl-CoA biosynthetic process"/>
    <property type="evidence" value="ECO:0007669"/>
    <property type="project" value="UniProtKB-UniRule"/>
</dbReference>
<dbReference type="Gene3D" id="3.90.226.10">
    <property type="entry name" value="2-enoyl-CoA Hydratase, Chain A, domain 1"/>
    <property type="match status" value="1"/>
</dbReference>
<dbReference type="HAMAP" id="MF_01395">
    <property type="entry name" value="AcetylCoA_CT_beta"/>
    <property type="match status" value="1"/>
</dbReference>
<dbReference type="InterPro" id="IPR034733">
    <property type="entry name" value="AcCoA_carboxyl_beta"/>
</dbReference>
<dbReference type="InterPro" id="IPR000438">
    <property type="entry name" value="Acetyl_CoA_COase_Trfase_b_su"/>
</dbReference>
<dbReference type="InterPro" id="IPR029045">
    <property type="entry name" value="ClpP/crotonase-like_dom_sf"/>
</dbReference>
<dbReference type="InterPro" id="IPR011762">
    <property type="entry name" value="COA_CT_N"/>
</dbReference>
<dbReference type="InterPro" id="IPR041010">
    <property type="entry name" value="Znf-ACC"/>
</dbReference>
<dbReference type="NCBIfam" id="TIGR00515">
    <property type="entry name" value="accD"/>
    <property type="match status" value="1"/>
</dbReference>
<dbReference type="PANTHER" id="PTHR42995">
    <property type="entry name" value="ACETYL-COENZYME A CARBOXYLASE CARBOXYL TRANSFERASE SUBUNIT BETA, CHLOROPLASTIC"/>
    <property type="match status" value="1"/>
</dbReference>
<dbReference type="PANTHER" id="PTHR42995:SF5">
    <property type="entry name" value="ACETYL-COENZYME A CARBOXYLASE CARBOXYL TRANSFERASE SUBUNIT BETA, CHLOROPLASTIC"/>
    <property type="match status" value="1"/>
</dbReference>
<dbReference type="Pfam" id="PF01039">
    <property type="entry name" value="Carboxyl_trans"/>
    <property type="match status" value="1"/>
</dbReference>
<dbReference type="Pfam" id="PF17848">
    <property type="entry name" value="Zn_ribbon_ACC"/>
    <property type="match status" value="1"/>
</dbReference>
<dbReference type="PRINTS" id="PR01070">
    <property type="entry name" value="ACCCTRFRASEB"/>
</dbReference>
<dbReference type="SUPFAM" id="SSF52096">
    <property type="entry name" value="ClpP/crotonase"/>
    <property type="match status" value="1"/>
</dbReference>
<dbReference type="PROSITE" id="PS50980">
    <property type="entry name" value="COA_CT_NTER"/>
    <property type="match status" value="1"/>
</dbReference>
<accession>Q03M46</accession>
<name>ACCD_STRTD</name>
<proteinExistence type="inferred from homology"/>
<feature type="chain" id="PRO_0000389890" description="Acetyl-coenzyme A carboxylase carboxyl transferase subunit beta">
    <location>
        <begin position="1"/>
        <end position="288"/>
    </location>
</feature>
<feature type="domain" description="CoA carboxyltransferase N-terminal" evidence="2">
    <location>
        <begin position="34"/>
        <end position="288"/>
    </location>
</feature>
<feature type="zinc finger region" description="C4-type" evidence="1">
    <location>
        <begin position="38"/>
        <end position="59"/>
    </location>
</feature>
<feature type="binding site" evidence="1">
    <location>
        <position position="38"/>
    </location>
    <ligand>
        <name>Zn(2+)</name>
        <dbReference type="ChEBI" id="CHEBI:29105"/>
    </ligand>
</feature>
<feature type="binding site" evidence="1">
    <location>
        <position position="41"/>
    </location>
    <ligand>
        <name>Zn(2+)</name>
        <dbReference type="ChEBI" id="CHEBI:29105"/>
    </ligand>
</feature>
<feature type="binding site" evidence="1">
    <location>
        <position position="56"/>
    </location>
    <ligand>
        <name>Zn(2+)</name>
        <dbReference type="ChEBI" id="CHEBI:29105"/>
    </ligand>
</feature>
<feature type="binding site" evidence="1">
    <location>
        <position position="59"/>
    </location>
    <ligand>
        <name>Zn(2+)</name>
        <dbReference type="ChEBI" id="CHEBI:29105"/>
    </ligand>
</feature>